<reference key="1">
    <citation type="journal article" date="1991" name="Virology">
        <title>Nucleotide sequence and genomic organization of Aedes densonucleosis virus.</title>
        <authorList>
            <person name="Afanasiev B.N."/>
            <person name="Galyov E.E."/>
            <person name="Buchatsky L.P."/>
            <person name="Kozlov Y.V."/>
        </authorList>
    </citation>
    <scope>NUCLEOTIDE SEQUENCE [GENOMIC DNA]</scope>
</reference>
<sequence length="849" mass="97543">MEYGLISKFYMDHWRWKIREKHKVENNLLSTYKYILNFHYHMVHPYIRSTKGGPNRVMNSVCVEHSPCEHGNLFCECIYCWEHDGQCRGRKLDLGASTGIERRLANDNQQPGLSDLYCTETIHLATAIPERRTIDRENYVKDFAGQTVGDLYPQLQGSTGASEPIDFAFPTVGSGSWEILVRESHKHFEPNYTEEAYQSHIRSVRRRLFPEETMDNNGSQASTTEMLRDAVQRCGFEGPPNSPSENNRDGIDGTCISTVDIQSNCIVNAHCPKQGTSNQTNKRKKSTDTTESSGSKKNKSSNYQQNLQEQGSTSISDTIDIVDGELDGSTGSNRETAYYTFVLHKNNVKEDWRYIATTRAKQAPSFITFDHGDHIHILFSSSNTGGNSTRVRTRITKFLSATSAGSAEATITFSKVKFLRNYILYCIRYGIETVNIYGNKIQQQLTEAMDTFKILFENRDPNDVILEAGCKLYHEEKKDNKQKRCGQRKQQNLTDIILEKIKEKKITTAQQWENQIEPEFKIQLMKEFGLNVDSYVTRIVRIERTRIQQLIKAKTLTEIMLEILNDEYIKHFTPGEDNSKTAKCIEWIEYLFKENNINIIHFLAWNEIIKTKRYKKINGMVLEGITNAGKSLILDNLLAMVKPEEIPRERDNSGFHLDQVPGAGSILFEEPMITPVNVGTWKLLLEGKTIKTDVKNKDKEPIERTPTWITTATPITNNIDMNETSQILQRIKLYILKKSIQHRDDKYTINAQIQNKLISRPPTLIEPIHMAIVFIKNFTKIYNLIAEEDKAHTVNEKAIQINNEVKEEAESWQTALQWTMTENNEEQNENETQALEDQVLELAKEQATT</sequence>
<protein>
    <recommendedName>
        <fullName evidence="2">Initiator protein NS1</fullName>
        <shortName>NS1</shortName>
        <ecNumber evidence="3">3.1.21.-</ecNumber>
        <ecNumber evidence="3">3.6.4.12</ecNumber>
    </recommendedName>
    <alternativeName>
        <fullName>Non-structural protein 1</fullName>
    </alternativeName>
    <alternativeName>
        <fullName>Non-structural protein NS1</fullName>
    </alternativeName>
</protein>
<evidence type="ECO:0000250" key="1">
    <source>
        <dbReference type="UniProtKB" id="D0EZM8"/>
    </source>
</evidence>
<evidence type="ECO:0000250" key="2">
    <source>
        <dbReference type="UniProtKB" id="P03134"/>
    </source>
</evidence>
<evidence type="ECO:0000250" key="3">
    <source>
        <dbReference type="UniProtKB" id="Q9PZT1"/>
    </source>
</evidence>
<evidence type="ECO:0000255" key="4">
    <source>
        <dbReference type="PROSITE-ProRule" id="PRU00551"/>
    </source>
</evidence>
<evidence type="ECO:0000255" key="5">
    <source>
        <dbReference type="PROSITE-ProRule" id="PRU01366"/>
    </source>
</evidence>
<evidence type="ECO:0000256" key="6">
    <source>
        <dbReference type="SAM" id="MobiDB-lite"/>
    </source>
</evidence>
<evidence type="ECO:0000305" key="7"/>
<feature type="chain" id="PRO_0000222478" description="Initiator protein NS1">
    <location>
        <begin position="1"/>
        <end position="849"/>
    </location>
</feature>
<feature type="domain" description="PV NS1-Nuc" evidence="5">
    <location>
        <begin position="192"/>
        <end position="466"/>
    </location>
</feature>
<feature type="domain" description="SF3 helicase" evidence="4">
    <location>
        <begin position="594"/>
        <end position="749"/>
    </location>
</feature>
<feature type="region of interest" description="Disordered" evidence="6">
    <location>
        <begin position="270"/>
        <end position="319"/>
    </location>
</feature>
<feature type="short sequence motif" description="RCR-2" evidence="5">
    <location>
        <begin position="374"/>
        <end position="376"/>
    </location>
</feature>
<feature type="compositionally biased region" description="Low complexity" evidence="6">
    <location>
        <begin position="292"/>
        <end position="308"/>
    </location>
</feature>
<feature type="active site" description="For nuclease activity" evidence="5">
    <location>
        <position position="422"/>
    </location>
</feature>
<feature type="binding site" evidence="5">
    <location>
        <position position="370"/>
    </location>
    <ligand>
        <name>a divalent metal cation</name>
        <dbReference type="ChEBI" id="CHEBI:60240"/>
    </ligand>
</feature>
<feature type="binding site" evidence="5">
    <location>
        <position position="374"/>
    </location>
    <ligand>
        <name>a divalent metal cation</name>
        <dbReference type="ChEBI" id="CHEBI:60240"/>
    </ligand>
</feature>
<feature type="binding site" evidence="5">
    <location>
        <position position="376"/>
    </location>
    <ligand>
        <name>a divalent metal cation</name>
        <dbReference type="ChEBI" id="CHEBI:60240"/>
    </ligand>
</feature>
<feature type="binding site" evidence="4">
    <location>
        <begin position="624"/>
        <end position="631"/>
    </location>
    <ligand>
        <name>ATP</name>
        <dbReference type="ChEBI" id="CHEBI:30616"/>
    </ligand>
</feature>
<organism>
    <name type="scientific">Aedes densonucleosis virus (strain GKV 002 002)</name>
    <name type="common">Aedes densovirus</name>
    <dbReference type="NCBI Taxonomy" id="10808"/>
    <lineage>
        <taxon>Viruses</taxon>
        <taxon>Monodnaviria</taxon>
        <taxon>Shotokuvirae</taxon>
        <taxon>Cossaviricota</taxon>
        <taxon>Quintoviricetes</taxon>
        <taxon>Piccovirales</taxon>
        <taxon>Parvoviridae</taxon>
        <taxon>Hamaparvovirinae</taxon>
        <taxon>Brevihamaparvovirus</taxon>
        <taxon>Brevihamaparvovirus dipteran1</taxon>
    </lineage>
</organism>
<gene>
    <name type="primary">NS1</name>
</gene>
<dbReference type="EC" id="3.1.21.-" evidence="3"/>
<dbReference type="EC" id="3.6.4.12" evidence="3"/>
<dbReference type="EMBL" id="M37899">
    <property type="status" value="NOT_ANNOTATED_CDS"/>
    <property type="molecule type" value="Genomic_DNA"/>
</dbReference>
<dbReference type="PIR" id="A40784">
    <property type="entry name" value="UYPVAD"/>
</dbReference>
<dbReference type="Proteomes" id="UP000008473">
    <property type="component" value="Genome"/>
</dbReference>
<dbReference type="GO" id="GO:0042025">
    <property type="term" value="C:host cell nucleus"/>
    <property type="evidence" value="ECO:0007669"/>
    <property type="project" value="UniProtKB-SubCell"/>
</dbReference>
<dbReference type="GO" id="GO:0005524">
    <property type="term" value="F:ATP binding"/>
    <property type="evidence" value="ECO:0007669"/>
    <property type="project" value="UniProtKB-KW"/>
</dbReference>
<dbReference type="GO" id="GO:0016887">
    <property type="term" value="F:ATP hydrolysis activity"/>
    <property type="evidence" value="ECO:0007669"/>
    <property type="project" value="RHEA"/>
</dbReference>
<dbReference type="GO" id="GO:0003677">
    <property type="term" value="F:DNA binding"/>
    <property type="evidence" value="ECO:0007669"/>
    <property type="project" value="UniProtKB-KW"/>
</dbReference>
<dbReference type="GO" id="GO:0004519">
    <property type="term" value="F:endonuclease activity"/>
    <property type="evidence" value="ECO:0007669"/>
    <property type="project" value="UniProtKB-KW"/>
</dbReference>
<dbReference type="GO" id="GO:0004386">
    <property type="term" value="F:helicase activity"/>
    <property type="evidence" value="ECO:0007669"/>
    <property type="project" value="UniProtKB-KW"/>
</dbReference>
<dbReference type="GO" id="GO:0046872">
    <property type="term" value="F:metal ion binding"/>
    <property type="evidence" value="ECO:0007669"/>
    <property type="project" value="UniProtKB-KW"/>
</dbReference>
<dbReference type="GO" id="GO:0006260">
    <property type="term" value="P:DNA replication"/>
    <property type="evidence" value="ECO:0007669"/>
    <property type="project" value="UniProtKB-KW"/>
</dbReference>
<dbReference type="GO" id="GO:0039693">
    <property type="term" value="P:viral DNA genome replication"/>
    <property type="evidence" value="ECO:0007669"/>
    <property type="project" value="UniProtKB-KW"/>
</dbReference>
<dbReference type="Gene3D" id="3.40.50.300">
    <property type="entry name" value="P-loop containing nucleotide triphosphate hydrolases"/>
    <property type="match status" value="1"/>
</dbReference>
<dbReference type="InterPro" id="IPR014015">
    <property type="entry name" value="Helicase_SF3_DNA-vir"/>
</dbReference>
<dbReference type="InterPro" id="IPR027417">
    <property type="entry name" value="P-loop_NTPase"/>
</dbReference>
<dbReference type="InterPro" id="IPR001257">
    <property type="entry name" value="Parvovirus_NS1_helicase"/>
</dbReference>
<dbReference type="InterPro" id="IPR049901">
    <property type="entry name" value="PV_NS1-NUC"/>
</dbReference>
<dbReference type="Pfam" id="PF01057">
    <property type="entry name" value="Parvo_NS1"/>
    <property type="match status" value="1"/>
</dbReference>
<dbReference type="SUPFAM" id="SSF52540">
    <property type="entry name" value="P-loop containing nucleoside triphosphate hydrolases"/>
    <property type="match status" value="1"/>
</dbReference>
<dbReference type="PROSITE" id="PS52022">
    <property type="entry name" value="PV_NS1_NUC"/>
    <property type="match status" value="1"/>
</dbReference>
<dbReference type="PROSITE" id="PS51206">
    <property type="entry name" value="SF3_HELICASE_1"/>
    <property type="match status" value="1"/>
</dbReference>
<keyword id="KW-0067">ATP-binding</keyword>
<keyword id="KW-0190">Covalent protein-DNA linkage</keyword>
<keyword id="KW-0235">DNA replication</keyword>
<keyword id="KW-0238">DNA-binding</keyword>
<keyword id="KW-0255">Endonuclease</keyword>
<keyword id="KW-0347">Helicase</keyword>
<keyword id="KW-1048">Host nucleus</keyword>
<keyword id="KW-0378">Hydrolase</keyword>
<keyword id="KW-0460">Magnesium</keyword>
<keyword id="KW-0479">Metal-binding</keyword>
<keyword id="KW-0540">Nuclease</keyword>
<keyword id="KW-0547">Nucleotide-binding</keyword>
<keyword id="KW-0804">Transcription</keyword>
<keyword id="KW-0805">Transcription regulation</keyword>
<keyword id="KW-1194">Viral DNA replication</keyword>
<keyword id="KW-0231">Viral genome packaging</keyword>
<keyword id="KW-1188">Viral release from host cell</keyword>
<name>NS1_AEDEV</name>
<proteinExistence type="inferred from homology"/>
<accession>P27454</accession>
<organismHost>
    <name type="scientific">Aedes</name>
    <dbReference type="NCBI Taxonomy" id="7158"/>
</organismHost>
<comment type="function">
    <text evidence="2">Multifunctional protein which displays endonuclease and helicase activities required for initiating and directing viral DNA replication. Also plays a role in viral packaging and transactivation of several promoters. Binds site-specifically to 2-3 approximate tandem copies within the origins of replication (Ori), unwinds this hairpin region and nicks one DNA strand thereby initiating the rolling circle replication (RCR).</text>
</comment>
<comment type="catalytic activity">
    <reaction evidence="2">
        <text>ATP + H2O = ADP + phosphate + H(+)</text>
        <dbReference type="Rhea" id="RHEA:13065"/>
        <dbReference type="ChEBI" id="CHEBI:15377"/>
        <dbReference type="ChEBI" id="CHEBI:15378"/>
        <dbReference type="ChEBI" id="CHEBI:30616"/>
        <dbReference type="ChEBI" id="CHEBI:43474"/>
        <dbReference type="ChEBI" id="CHEBI:456216"/>
        <dbReference type="EC" id="3.6.4.12"/>
    </reaction>
</comment>
<comment type="cofactor">
    <cofactor evidence="2">
        <name>Mg(2+)</name>
        <dbReference type="ChEBI" id="CHEBI:18420"/>
    </cofactor>
    <text evidence="2">The endonuclease active site can probably bind other divalent cations.</text>
</comment>
<comment type="subunit">
    <text evidence="2">Homooligomer.</text>
</comment>
<comment type="subcellular location">
    <subcellularLocation>
        <location evidence="1">Host nucleus</location>
    </subcellularLocation>
</comment>
<comment type="domain">
    <text evidence="2 3">In the N-terminus, the endonuclease region is involved in binding to the origin of replication. In the middle, there are the ATPase and helicase activities (By similarity). The C-terminus probably contains a transactivation domain (By similarity).</text>
</comment>
<comment type="similarity">
    <text evidence="7">Belongs to the parvoviruses initiator protein NS1 family.</text>
</comment>